<sequence length="490" mass="55918">MSPKQEEYEVERIVDEKLDRNGAVKLYRIRWLNYSSRSDTWEPPENLSGCSAVLAEWKRRKRRLKGSNSDSDSPHHASNPHPNSRQKHQHQTSKSVPRSQRFSRELNVKKENKKVFSSQTTKRQSRKQSTALTTNDTSIILDDSLHTNSKKLGKTRNEVKEESQKRELVSNSIKEATSPKTSSILTKPRNPSKLDSYTHLSFYEKRELFRKKLREIEGPEVTLVNEVDDEPCPSLDFQFISQYRLTQGVIPPDPNFQSGCNCSSLGGCDLNNPSRCECLDDLDEPTHFAYDAQGRVRADTGAVIYECNSFCSCSMECPNRVVQRGRTLPLEIFKTKEKGWGVRSLRFAPAGTFITCYLGEVITSAEAAKRDKNYDDDGITYLFDLDMFDDASEYTVDAQNYGDVSRFFNHSCSPNIAIYSAVRNHGFRTIYDLAFFAIKDIQPLEELTFDYAGAKDFSPVQSQKSQQNRISKLRRQCKCGSANCRGWLFG</sequence>
<organism>
    <name type="scientific">Schizosaccharomyces pombe (strain 972 / ATCC 24843)</name>
    <name type="common">Fission yeast</name>
    <dbReference type="NCBI Taxonomy" id="284812"/>
    <lineage>
        <taxon>Eukaryota</taxon>
        <taxon>Fungi</taxon>
        <taxon>Dikarya</taxon>
        <taxon>Ascomycota</taxon>
        <taxon>Taphrinomycotina</taxon>
        <taxon>Schizosaccharomycetes</taxon>
        <taxon>Schizosaccharomycetales</taxon>
        <taxon>Schizosaccharomycetaceae</taxon>
        <taxon>Schizosaccharomyces</taxon>
    </lineage>
</organism>
<reference key="1">
    <citation type="journal article" date="1998" name="Nat. Genet.">
        <title>The chromo and SET domains of the Clr4 protein are essential for silencing in fission yeast.</title>
        <authorList>
            <person name="Ivanova A.V."/>
            <person name="Bonaduce M.J."/>
            <person name="Ivanov S.V."/>
            <person name="Klar A.J.S."/>
        </authorList>
    </citation>
    <scope>NUCLEOTIDE SEQUENCE [GENOMIC DNA]</scope>
</reference>
<reference key="2">
    <citation type="thesis" date="1998" institute="University of Edinburgh" country="United Kingdom">
        <authorList>
            <person name="Lord P."/>
        </authorList>
    </citation>
    <scope>NUCLEOTIDE SEQUENCE [GENOMIC DNA]</scope>
    <source>
        <strain>SP813</strain>
    </source>
</reference>
<reference key="3">
    <citation type="journal article" date="2002" name="Nature">
        <title>The genome sequence of Schizosaccharomyces pombe.</title>
        <authorList>
            <person name="Wood V."/>
            <person name="Gwilliam R."/>
            <person name="Rajandream M.A."/>
            <person name="Lyne M.H."/>
            <person name="Lyne R."/>
            <person name="Stewart A."/>
            <person name="Sgouros J.G."/>
            <person name="Peat N."/>
            <person name="Hayles J."/>
            <person name="Baker S.G."/>
            <person name="Basham D."/>
            <person name="Bowman S."/>
            <person name="Brooks K."/>
            <person name="Brown D."/>
            <person name="Brown S."/>
            <person name="Chillingworth T."/>
            <person name="Churcher C.M."/>
            <person name="Collins M."/>
            <person name="Connor R."/>
            <person name="Cronin A."/>
            <person name="Davis P."/>
            <person name="Feltwell T."/>
            <person name="Fraser A."/>
            <person name="Gentles S."/>
            <person name="Goble A."/>
            <person name="Hamlin N."/>
            <person name="Harris D.E."/>
            <person name="Hidalgo J."/>
            <person name="Hodgson G."/>
            <person name="Holroyd S."/>
            <person name="Hornsby T."/>
            <person name="Howarth S."/>
            <person name="Huckle E.J."/>
            <person name="Hunt S."/>
            <person name="Jagels K."/>
            <person name="James K.D."/>
            <person name="Jones L."/>
            <person name="Jones M."/>
            <person name="Leather S."/>
            <person name="McDonald S."/>
            <person name="McLean J."/>
            <person name="Mooney P."/>
            <person name="Moule S."/>
            <person name="Mungall K.L."/>
            <person name="Murphy L.D."/>
            <person name="Niblett D."/>
            <person name="Odell C."/>
            <person name="Oliver K."/>
            <person name="O'Neil S."/>
            <person name="Pearson D."/>
            <person name="Quail M.A."/>
            <person name="Rabbinowitsch E."/>
            <person name="Rutherford K.M."/>
            <person name="Rutter S."/>
            <person name="Saunders D."/>
            <person name="Seeger K."/>
            <person name="Sharp S."/>
            <person name="Skelton J."/>
            <person name="Simmonds M.N."/>
            <person name="Squares R."/>
            <person name="Squares S."/>
            <person name="Stevens K."/>
            <person name="Taylor K."/>
            <person name="Taylor R.G."/>
            <person name="Tivey A."/>
            <person name="Walsh S.V."/>
            <person name="Warren T."/>
            <person name="Whitehead S."/>
            <person name="Woodward J.R."/>
            <person name="Volckaert G."/>
            <person name="Aert R."/>
            <person name="Robben J."/>
            <person name="Grymonprez B."/>
            <person name="Weltjens I."/>
            <person name="Vanstreels E."/>
            <person name="Rieger M."/>
            <person name="Schaefer M."/>
            <person name="Mueller-Auer S."/>
            <person name="Gabel C."/>
            <person name="Fuchs M."/>
            <person name="Duesterhoeft A."/>
            <person name="Fritzc C."/>
            <person name="Holzer E."/>
            <person name="Moestl D."/>
            <person name="Hilbert H."/>
            <person name="Borzym K."/>
            <person name="Langer I."/>
            <person name="Beck A."/>
            <person name="Lehrach H."/>
            <person name="Reinhardt R."/>
            <person name="Pohl T.M."/>
            <person name="Eger P."/>
            <person name="Zimmermann W."/>
            <person name="Wedler H."/>
            <person name="Wambutt R."/>
            <person name="Purnelle B."/>
            <person name="Goffeau A."/>
            <person name="Cadieu E."/>
            <person name="Dreano S."/>
            <person name="Gloux S."/>
            <person name="Lelaure V."/>
            <person name="Mottier S."/>
            <person name="Galibert F."/>
            <person name="Aves S.J."/>
            <person name="Xiang Z."/>
            <person name="Hunt C."/>
            <person name="Moore K."/>
            <person name="Hurst S.M."/>
            <person name="Lucas M."/>
            <person name="Rochet M."/>
            <person name="Gaillardin C."/>
            <person name="Tallada V.A."/>
            <person name="Garzon A."/>
            <person name="Thode G."/>
            <person name="Daga R.R."/>
            <person name="Cruzado L."/>
            <person name="Jimenez J."/>
            <person name="Sanchez M."/>
            <person name="del Rey F."/>
            <person name="Benito J."/>
            <person name="Dominguez A."/>
            <person name="Revuelta J.L."/>
            <person name="Moreno S."/>
            <person name="Armstrong J."/>
            <person name="Forsburg S.L."/>
            <person name="Cerutti L."/>
            <person name="Lowe T."/>
            <person name="McCombie W.R."/>
            <person name="Paulsen I."/>
            <person name="Potashkin J."/>
            <person name="Shpakovski G.V."/>
            <person name="Ussery D."/>
            <person name="Barrell B.G."/>
            <person name="Nurse P."/>
        </authorList>
    </citation>
    <scope>NUCLEOTIDE SEQUENCE [LARGE SCALE GENOMIC DNA]</scope>
    <source>
        <strain>972 / ATCC 24843</strain>
    </source>
</reference>
<reference key="4">
    <citation type="journal article" date="2005" name="Genes Dev.">
        <title>A Rik1-associated, cullin-dependent E3 ubiquitin ligase is essential for heterochromatin formation.</title>
        <authorList>
            <person name="Horn P.J."/>
            <person name="Bastie J.-N."/>
            <person name="Peterson C.L."/>
        </authorList>
    </citation>
    <scope>PARTIAL PROTEIN SEQUENCE</scope>
    <scope>IDENTIFICATION IN THE RIK1-ASSOCIATED E3 UBIQUITIN LIGASE COMPLEX</scope>
    <scope>FUNCTION</scope>
</reference>
<reference key="5">
    <citation type="journal article" date="2005" name="Nat. Cell Biol.">
        <title>Ubiquitin ligase component Cul4 associates with Clr4 histone methyltransferase to assemble heterochromatin.</title>
        <authorList>
            <person name="Jia S."/>
            <person name="Kobayashi R."/>
            <person name="Grewal S.I.S."/>
        </authorList>
    </citation>
    <scope>PROTEIN SEQUENCE OF 64-85; 127-150; 190-205; 371-406; 429-455 AND 486-490</scope>
    <scope>INTERACTION WITH CUL4</scope>
</reference>
<reference key="6">
    <citation type="journal article" date="1994" name="Genetics">
        <title>Mutations in rik1, clr2, clr3 and clr4 genes asymmetrically derepress the silent mating-type loci in fission yeast.</title>
        <authorList>
            <person name="Ekwall K."/>
            <person name="Ruusala T."/>
        </authorList>
    </citation>
    <scope>FUNCTION</scope>
</reference>
<reference key="7">
    <citation type="journal article" date="2000" name="Nature">
        <title>Regulation of chromatin structure by site-specific histone H3 methyltransferases.</title>
        <authorList>
            <person name="Rea S."/>
            <person name="Eisenhaber F."/>
            <person name="O'Carroll D."/>
            <person name="Strahl B.D."/>
            <person name="Sun Z.-W."/>
            <person name="Schmid M."/>
            <person name="Opravil S."/>
            <person name="Mechtler K."/>
            <person name="Ponting C.P."/>
            <person name="Allis C.D."/>
            <person name="Jenuwein T."/>
        </authorList>
    </citation>
    <scope>CATALYTIC ACTIVITY</scope>
</reference>
<reference key="8">
    <citation type="journal article" date="2001" name="Nature">
        <title>Selective recognition of methylated lysine 9 on histone H3 by the HP1 chromo domain.</title>
        <authorList>
            <person name="Bannister A.J."/>
            <person name="Zegerman P."/>
            <person name="Partridge J.F."/>
            <person name="Miska E.A."/>
            <person name="Thomas J.O."/>
            <person name="Allshire R.C."/>
            <person name="Kouzarides T."/>
        </authorList>
    </citation>
    <scope>FUNCTION</scope>
</reference>
<reference key="9">
    <citation type="journal article" date="2001" name="Science">
        <title>Role of histone H3 lysine 9 methylation in epigenetic control of heterochromatin assembly.</title>
        <authorList>
            <person name="Nakayama J."/>
            <person name="Rice J.C."/>
            <person name="Strahl B.D."/>
            <person name="Allis C.D."/>
            <person name="Grewal S.I.S."/>
        </authorList>
    </citation>
    <scope>CATALYTIC ACTIVITY</scope>
    <scope>MUTAGENESIS OF TRP-31; TRP-41; ARG-320; GLY-378 AND GLY-486</scope>
</reference>
<reference key="10">
    <citation type="journal article" date="2005" name="RNA Biol.">
        <title>A cullin E3 ubiquitin ligase complex associates with Rik1 and the Clr4 histone H3-K9 methyltransferase and is required for RNAi-mediated heterochromatin formation.</title>
        <authorList>
            <person name="Hong E.J."/>
            <person name="Villen J."/>
            <person name="Gerace E.L."/>
            <person name="Gygi S.P."/>
            <person name="Moazed D."/>
        </authorList>
    </citation>
    <scope>SUBUNIT</scope>
</reference>
<reference key="11">
    <citation type="journal article" date="2006" name="Nat. Biotechnol.">
        <title>ORFeome cloning and global analysis of protein localization in the fission yeast Schizosaccharomyces pombe.</title>
        <authorList>
            <person name="Matsuyama A."/>
            <person name="Arai R."/>
            <person name="Yashiroda Y."/>
            <person name="Shirai A."/>
            <person name="Kamata A."/>
            <person name="Sekido S."/>
            <person name="Kobayashi Y."/>
            <person name="Hashimoto A."/>
            <person name="Hamamoto M."/>
            <person name="Hiraoka Y."/>
            <person name="Horinouchi S."/>
            <person name="Yoshida M."/>
        </authorList>
    </citation>
    <scope>SUBCELLULAR LOCATION [LARGE SCALE ANALYSIS]</scope>
</reference>
<reference key="12">
    <citation type="journal article" date="2008" name="Nat. Struct. Mol. Biol.">
        <title>Roles of the Clr4 methyltransferase complex in nucleation, spreading and maintenance of heterochromatin.</title>
        <authorList>
            <person name="Zhang K."/>
            <person name="Mosch K."/>
            <person name="Fischle W."/>
            <person name="Grewal S.I."/>
        </authorList>
    </citation>
    <scope>FUNCTION</scope>
    <scope>SUBCELLULAR LOCATION</scope>
</reference>
<reference key="13">
    <citation type="journal article" date="2010" name="Mol. Cell">
        <title>The methyltransferase activity of Clr4Suv39h triggers RNAi independently of histone H3K9 methylation.</title>
        <authorList>
            <person name="Gerace E.L."/>
            <person name="Halic M."/>
            <person name="Moazed D."/>
        </authorList>
    </citation>
    <scope>FUNCTION</scope>
</reference>
<reference key="14">
    <citation type="journal article" date="2011" name="J. Biol. Chem.">
        <title>Role of Swi6/HP1 self-association-mediated recruitment of Clr4/Suv39 in establishment and maintenance of heterochromatin in fission yeast.</title>
        <authorList>
            <person name="Haldar S."/>
            <person name="Saini A."/>
            <person name="Nanda J.S."/>
            <person name="Saini S."/>
            <person name="Singh J."/>
        </authorList>
    </citation>
    <scope>FUNCTION</scope>
</reference>
<reference key="15">
    <citation type="journal article" date="2011" name="Science">
        <title>Clr4/Suv39 and RNA quality control factors cooperate to trigger RNAi and suppress antisense RNA.</title>
        <authorList>
            <person name="Zhang K."/>
            <person name="Fischer T."/>
            <person name="Porter R.L."/>
            <person name="Dhakshnamoorthy J."/>
            <person name="Zofall M."/>
            <person name="Zhou M."/>
            <person name="Veenstra T."/>
            <person name="Grewal S.I."/>
        </authorList>
    </citation>
    <scope>FUNCTION</scope>
    <scope>INTERACTION WITH MLO3</scope>
</reference>
<reference key="16">
    <citation type="journal article" date="2017" name="Biochimie">
        <title>Clr4 specificity and catalytic activity beyond H3K9 methylation.</title>
        <authorList>
            <person name="Kusevic D."/>
            <person name="Kudithipudi S."/>
            <person name="Iglesias N."/>
            <person name="Moazed D."/>
            <person name="Jeltsch A."/>
        </authorList>
    </citation>
    <scope>FUNCTION</scope>
    <scope>CATALYTIC ACTIVITY</scope>
</reference>
<reference key="17">
    <citation type="journal article" date="2019" name="EMBO Rep.">
        <title>H3K14 ubiquitylation promotes H3K9 methylation for heterochromatin assembly.</title>
        <authorList>
            <person name="Oya E."/>
            <person name="Nakagawa R."/>
            <person name="Yoshimura Y."/>
            <person name="Tanaka M."/>
            <person name="Nishibuchi G."/>
            <person name="Machida S."/>
            <person name="Shirai A."/>
            <person name="Ekwall K."/>
            <person name="Kurumizaka H."/>
            <person name="Tagami H."/>
            <person name="Nakayama J.I."/>
        </authorList>
    </citation>
    <scope>FUNCTION</scope>
    <scope>CATALYTIC ACTIVITY</scope>
</reference>
<reference key="18">
    <citation type="journal article" date="2001" name="J. Mol. Biol.">
        <title>Solution structure, domain features, and structural implications of mutants of the chromo domain from the fission yeast histone methyltransferase Clr4.</title>
        <authorList>
            <person name="Horita D.A."/>
            <person name="Ivanova A.V."/>
            <person name="Altieri A.S."/>
            <person name="Klar A.J."/>
            <person name="Byrd R.A."/>
        </authorList>
    </citation>
    <scope>STRUCTURE BY NMR OF 2-69</scope>
</reference>
<reference key="19">
    <citation type="journal article" date="2002" name="Nat. Struct. Biol.">
        <title>Structure of the SET domain histone lysine methyltransferase Clr4.</title>
        <authorList>
            <person name="Min J."/>
            <person name="Zhang X."/>
            <person name="Cheng X."/>
            <person name="Grewal S.I.S."/>
            <person name="Xu R.M."/>
        </authorList>
    </citation>
    <scope>X-RAY CRYSTALLOGRAPHY (2.3 ANGSTROMS) OF 192-490 IN COMPLEX WITH ZINC IONS</scope>
</reference>
<reference key="20">
    <citation type="journal article" date="2018" name="Nature">
        <title>Automethylation-induced conformational switch in Clr4 (Suv39h) maintains epigenetic stability.</title>
        <authorList>
            <person name="Iglesias N."/>
            <person name="Currie M.A."/>
            <person name="Jih G."/>
            <person name="Paulo J.A."/>
            <person name="Siuti N."/>
            <person name="Kalocsay M."/>
            <person name="Gygi S.P."/>
            <person name="Moazed D."/>
        </authorList>
    </citation>
    <scope>X-RAY CRYSTALLOGRAPHY (2.41 ANGSTROMS) OF 192-490 IN COMPLEX WITH S-ADENOSYL-L-HOMOCYSTEINE AND ZINC IONS</scope>
    <scope>METHYLATION AT LYS-127; LYS-455 AND LYS-464</scope>
    <scope>MUTAGENESIS OF TYR-451 AND LYS-455</scope>
</reference>
<protein>
    <recommendedName>
        <fullName>Histone-lysine N-methyltransferase, H3 lysine-9 specific</fullName>
        <ecNumber evidence="8">2.1.1.355</ecNumber>
        <ecNumber evidence="19">2.1.1.366</ecNumber>
        <ecNumber evidence="6 8">2.1.1.367</ecNumber>
    </recommendedName>
    <alternativeName>
        <fullName>Cryptic loci regulator 4</fullName>
    </alternativeName>
    <alternativeName>
        <fullName>Histone H3-K9 methyltransferase</fullName>
        <shortName>H3-K9-HMTase</shortName>
        <shortName>HKMT</shortName>
    </alternativeName>
    <alternativeName>
        <fullName>Lysine N-methyltransferase 1</fullName>
    </alternativeName>
    <alternativeName>
        <fullName evidence="22">Protein lysine methyltransferase clr4</fullName>
        <shortName>PKMT</shortName>
    </alternativeName>
</protein>
<evidence type="ECO:0000255" key="1">
    <source>
        <dbReference type="PROSITE-ProRule" id="PRU00053"/>
    </source>
</evidence>
<evidence type="ECO:0000255" key="2">
    <source>
        <dbReference type="PROSITE-ProRule" id="PRU00155"/>
    </source>
</evidence>
<evidence type="ECO:0000255" key="3">
    <source>
        <dbReference type="PROSITE-ProRule" id="PRU00157"/>
    </source>
</evidence>
<evidence type="ECO:0000255" key="4">
    <source>
        <dbReference type="PROSITE-ProRule" id="PRU00190"/>
    </source>
</evidence>
<evidence type="ECO:0000256" key="5">
    <source>
        <dbReference type="SAM" id="MobiDB-lite"/>
    </source>
</evidence>
<evidence type="ECO:0000269" key="6">
    <source>
    </source>
</evidence>
<evidence type="ECO:0000269" key="7">
    <source>
    </source>
</evidence>
<evidence type="ECO:0000269" key="8">
    <source>
    </source>
</evidence>
<evidence type="ECO:0000269" key="9">
    <source>
    </source>
</evidence>
<evidence type="ECO:0000269" key="10">
    <source>
    </source>
</evidence>
<evidence type="ECO:0000269" key="11">
    <source>
    </source>
</evidence>
<evidence type="ECO:0000269" key="12">
    <source>
    </source>
</evidence>
<evidence type="ECO:0000269" key="13">
    <source>
    </source>
</evidence>
<evidence type="ECO:0000269" key="14">
    <source>
    </source>
</evidence>
<evidence type="ECO:0000269" key="15">
    <source>
    </source>
</evidence>
<evidence type="ECO:0000269" key="16">
    <source>
    </source>
</evidence>
<evidence type="ECO:0000269" key="17">
    <source>
    </source>
</evidence>
<evidence type="ECO:0000269" key="18">
    <source>
    </source>
</evidence>
<evidence type="ECO:0000269" key="19">
    <source>
    </source>
</evidence>
<evidence type="ECO:0000269" key="20">
    <source>
    </source>
</evidence>
<evidence type="ECO:0000269" key="21">
    <source>
    </source>
</evidence>
<evidence type="ECO:0000303" key="22">
    <source>
    </source>
</evidence>
<evidence type="ECO:0000305" key="23"/>
<evidence type="ECO:0000305" key="24">
    <source>
    </source>
</evidence>
<evidence type="ECO:0000305" key="25">
    <source>
    </source>
</evidence>
<evidence type="ECO:0007829" key="26">
    <source>
        <dbReference type="PDB" id="1G6Z"/>
    </source>
</evidence>
<evidence type="ECO:0007829" key="27">
    <source>
        <dbReference type="PDB" id="1MVH"/>
    </source>
</evidence>
<evidence type="ECO:0007829" key="28">
    <source>
        <dbReference type="PDB" id="6BOX"/>
    </source>
</evidence>
<evidence type="ECO:0007829" key="29">
    <source>
        <dbReference type="PDB" id="6BP4"/>
    </source>
</evidence>
<gene>
    <name type="primary">clr4</name>
    <name type="synonym">kmt1</name>
    <name type="ORF">SPBC428.08c</name>
</gene>
<feature type="chain" id="PRO_0000186063" description="Histone-lysine N-methyltransferase, H3 lysine-9 specific">
    <location>
        <begin position="1"/>
        <end position="490"/>
    </location>
</feature>
<feature type="domain" description="Chromo" evidence="1">
    <location>
        <begin position="8"/>
        <end position="69"/>
    </location>
</feature>
<feature type="domain" description="Pre-SET" evidence="3">
    <location>
        <begin position="258"/>
        <end position="325"/>
    </location>
</feature>
<feature type="domain" description="SET" evidence="4">
    <location>
        <begin position="328"/>
        <end position="452"/>
    </location>
</feature>
<feature type="domain" description="Post-SET" evidence="2">
    <location>
        <begin position="473"/>
        <end position="489"/>
    </location>
</feature>
<feature type="region of interest" description="Disordered" evidence="5">
    <location>
        <begin position="61"/>
        <end position="133"/>
    </location>
</feature>
<feature type="region of interest" description="Disordered" evidence="5">
    <location>
        <begin position="150"/>
        <end position="190"/>
    </location>
</feature>
<feature type="region of interest" description="Autoregulatory loop" evidence="25">
    <location>
        <begin position="453"/>
        <end position="472"/>
    </location>
</feature>
<feature type="compositionally biased region" description="Basic and acidic residues" evidence="5">
    <location>
        <begin position="102"/>
        <end position="114"/>
    </location>
</feature>
<feature type="compositionally biased region" description="Polar residues" evidence="5">
    <location>
        <begin position="115"/>
        <end position="133"/>
    </location>
</feature>
<feature type="compositionally biased region" description="Basic and acidic residues" evidence="5">
    <location>
        <begin position="155"/>
        <end position="168"/>
    </location>
</feature>
<feature type="compositionally biased region" description="Polar residues" evidence="5">
    <location>
        <begin position="169"/>
        <end position="185"/>
    </location>
</feature>
<feature type="binding site" evidence="9 19">
    <location>
        <position position="260"/>
    </location>
    <ligand>
        <name>Zn(2+)</name>
        <dbReference type="ChEBI" id="CHEBI:29105"/>
        <label>1</label>
    </ligand>
</feature>
<feature type="binding site" evidence="9 19">
    <location>
        <position position="260"/>
    </location>
    <ligand>
        <name>Zn(2+)</name>
        <dbReference type="ChEBI" id="CHEBI:29105"/>
        <label>2</label>
    </ligand>
</feature>
<feature type="binding site" evidence="9 19">
    <location>
        <position position="262"/>
    </location>
    <ligand>
        <name>Zn(2+)</name>
        <dbReference type="ChEBI" id="CHEBI:29105"/>
        <label>1</label>
    </ligand>
</feature>
<feature type="binding site" evidence="9 19">
    <location>
        <position position="268"/>
    </location>
    <ligand>
        <name>Zn(2+)</name>
        <dbReference type="ChEBI" id="CHEBI:29105"/>
        <label>1</label>
    </ligand>
</feature>
<feature type="binding site" evidence="9 19">
    <location>
        <position position="268"/>
    </location>
    <ligand>
        <name>Zn(2+)</name>
        <dbReference type="ChEBI" id="CHEBI:29105"/>
        <label>3</label>
    </ligand>
</feature>
<feature type="binding site" evidence="9 19">
    <location>
        <position position="276"/>
    </location>
    <ligand>
        <name>Zn(2+)</name>
        <dbReference type="ChEBI" id="CHEBI:29105"/>
        <label>1</label>
    </ligand>
</feature>
<feature type="binding site" evidence="9 19">
    <location>
        <position position="278"/>
    </location>
    <ligand>
        <name>Zn(2+)</name>
        <dbReference type="ChEBI" id="CHEBI:29105"/>
        <label>2</label>
    </ligand>
</feature>
<feature type="binding site" evidence="9 19">
    <location>
        <position position="307"/>
    </location>
    <ligand>
        <name>Zn(2+)</name>
        <dbReference type="ChEBI" id="CHEBI:29105"/>
        <label>2</label>
    </ligand>
</feature>
<feature type="binding site" evidence="9 19">
    <location>
        <position position="307"/>
    </location>
    <ligand>
        <name>Zn(2+)</name>
        <dbReference type="ChEBI" id="CHEBI:29105"/>
        <label>3</label>
    </ligand>
</feature>
<feature type="binding site" evidence="9 19">
    <location>
        <position position="311"/>
    </location>
    <ligand>
        <name>Zn(2+)</name>
        <dbReference type="ChEBI" id="CHEBI:29105"/>
        <label>2</label>
    </ligand>
</feature>
<feature type="binding site" evidence="9 19">
    <location>
        <position position="313"/>
    </location>
    <ligand>
        <name>Zn(2+)</name>
        <dbReference type="ChEBI" id="CHEBI:29105"/>
        <label>3</label>
    </ligand>
</feature>
<feature type="binding site" evidence="9 19">
    <location>
        <position position="317"/>
    </location>
    <ligand>
        <name>Zn(2+)</name>
        <dbReference type="ChEBI" id="CHEBI:29105"/>
        <label>3</label>
    </ligand>
</feature>
<feature type="binding site" evidence="19">
    <location>
        <begin position="338"/>
        <end position="340"/>
    </location>
    <ligand>
        <name>S-adenosyl-L-methionine</name>
        <dbReference type="ChEBI" id="CHEBI:59789"/>
    </ligand>
</feature>
<feature type="binding site" evidence="4">
    <location>
        <position position="381"/>
    </location>
    <ligand>
        <name>S-adenosyl-L-methionine</name>
        <dbReference type="ChEBI" id="CHEBI:59789"/>
    </ligand>
</feature>
<feature type="binding site" evidence="4">
    <location>
        <position position="406"/>
    </location>
    <ligand>
        <name>S-adenosyl-L-methionine</name>
        <dbReference type="ChEBI" id="CHEBI:59789"/>
    </ligand>
</feature>
<feature type="binding site" evidence="19">
    <location>
        <begin position="407"/>
        <end position="410"/>
    </location>
    <ligand>
        <name>S-adenosyl-L-methionine</name>
        <dbReference type="ChEBI" id="CHEBI:59789"/>
    </ligand>
</feature>
<feature type="binding site" evidence="19">
    <location>
        <position position="412"/>
    </location>
    <ligand>
        <name>Zn(2+)</name>
        <dbReference type="ChEBI" id="CHEBI:29105"/>
        <label>4</label>
    </ligand>
</feature>
<feature type="binding site" evidence="19">
    <location>
        <begin position="477"/>
        <end position="478"/>
    </location>
    <ligand>
        <name>S-adenosyl-L-methionine</name>
        <dbReference type="ChEBI" id="CHEBI:59789"/>
    </ligand>
</feature>
<feature type="binding site" evidence="19">
    <location>
        <position position="477"/>
    </location>
    <ligand>
        <name>Zn(2+)</name>
        <dbReference type="ChEBI" id="CHEBI:29105"/>
        <label>4</label>
    </ligand>
</feature>
<feature type="binding site" evidence="19">
    <location>
        <position position="479"/>
    </location>
    <ligand>
        <name>Zn(2+)</name>
        <dbReference type="ChEBI" id="CHEBI:29105"/>
        <label>4</label>
    </ligand>
</feature>
<feature type="binding site" evidence="19">
    <location>
        <position position="484"/>
    </location>
    <ligand>
        <name>Zn(2+)</name>
        <dbReference type="ChEBI" id="CHEBI:29105"/>
        <label>4</label>
    </ligand>
</feature>
<feature type="modified residue" description="N6,N6,N6-trimethyllysine; alternate" evidence="19">
    <location>
        <position position="127"/>
    </location>
</feature>
<feature type="modified residue" description="N6-methyllysine; alternate" evidence="19">
    <location>
        <position position="127"/>
    </location>
</feature>
<feature type="modified residue" description="N6,N6,N6-trimethyllysine; by autocatalysis; alternate" evidence="19">
    <location>
        <position position="455"/>
    </location>
</feature>
<feature type="modified residue" description="N6,N6-dimethyllysine; by autocatalysis; alternate" evidence="19">
    <location>
        <position position="455"/>
    </location>
</feature>
<feature type="modified residue" description="N6-methyllysine; by autocatalysis; alternate" evidence="19">
    <location>
        <position position="455"/>
    </location>
</feature>
<feature type="modified residue" description="N6-methyllysine" evidence="19">
    <location>
        <position position="464"/>
    </location>
</feature>
<feature type="mutagenesis site" description="Weak effect on methyltransferase activity." evidence="8">
    <original>W</original>
    <variation>G</variation>
    <location>
        <position position="31"/>
    </location>
</feature>
<feature type="mutagenesis site" description="Weak effect on methyltransferase activity." evidence="8">
    <original>W</original>
    <variation>G</variation>
    <location>
        <position position="41"/>
    </location>
</feature>
<feature type="mutagenesis site" description="Abolishes methyltransferase activity." evidence="8">
    <original>R</original>
    <variation>H</variation>
    <location>
        <position position="320"/>
    </location>
</feature>
<feature type="mutagenesis site" description="Abolishes methyltransferase activity." evidence="8">
    <original>G</original>
    <variation>S</variation>
    <location>
        <position position="378"/>
    </location>
</feature>
<feature type="mutagenesis site" description="Abolishes methyltransferase activity." evidence="19">
    <original>Y</original>
    <variation>N</variation>
    <location>
        <position position="451"/>
    </location>
</feature>
<feature type="mutagenesis site" description="Greatly diminishes Clr4 automethylation and causes hyperactivity towards histone H3K9." evidence="19">
    <original>K</original>
    <variation>R</variation>
    <location>
        <position position="455"/>
    </location>
</feature>
<feature type="mutagenesis site" description="Abolishes methyltransferase activity." evidence="8">
    <original>G</original>
    <variation>D</variation>
    <location>
        <position position="486"/>
    </location>
</feature>
<feature type="sequence conflict" description="In Ref. 1; AAC18302." evidence="23" ref="1">
    <original>D</original>
    <variation>G</variation>
    <location>
        <position position="19"/>
    </location>
</feature>
<feature type="sequence conflict" description="In Ref. 4; AA sequence." evidence="23" ref="4">
    <location>
        <position position="142"/>
    </location>
</feature>
<feature type="sequence conflict" description="In Ref. 1; AAC18302." evidence="23" ref="1">
    <original>A</original>
    <variation>G</variation>
    <location>
        <position position="437"/>
    </location>
</feature>
<feature type="strand" evidence="26">
    <location>
        <begin position="14"/>
        <end position="17"/>
    </location>
</feature>
<feature type="strand" evidence="26">
    <location>
        <begin position="26"/>
        <end position="29"/>
    </location>
</feature>
<feature type="turn" evidence="26">
    <location>
        <begin position="32"/>
        <end position="35"/>
    </location>
</feature>
<feature type="strand" evidence="26">
    <location>
        <begin position="40"/>
        <end position="42"/>
    </location>
</feature>
<feature type="helix" evidence="26">
    <location>
        <begin position="44"/>
        <end position="47"/>
    </location>
</feature>
<feature type="helix" evidence="26">
    <location>
        <begin position="51"/>
        <end position="61"/>
    </location>
</feature>
<feature type="turn" evidence="26">
    <location>
        <begin position="62"/>
        <end position="65"/>
    </location>
</feature>
<feature type="helix" evidence="27">
    <location>
        <begin position="196"/>
        <end position="214"/>
    </location>
</feature>
<feature type="strand" evidence="27">
    <location>
        <begin position="216"/>
        <end position="219"/>
    </location>
</feature>
<feature type="strand" evidence="27">
    <location>
        <begin position="221"/>
        <end position="224"/>
    </location>
</feature>
<feature type="strand" evidence="28">
    <location>
        <begin position="226"/>
        <end position="228"/>
    </location>
</feature>
<feature type="strand" evidence="27">
    <location>
        <begin position="237"/>
        <end position="239"/>
    </location>
</feature>
<feature type="helix" evidence="27">
    <location>
        <begin position="254"/>
        <end position="256"/>
    </location>
</feature>
<feature type="strand" evidence="27">
    <location>
        <begin position="265"/>
        <end position="268"/>
    </location>
</feature>
<feature type="turn" evidence="27">
    <location>
        <begin position="273"/>
        <end position="275"/>
    </location>
</feature>
<feature type="strand" evidence="27">
    <location>
        <begin position="277"/>
        <end position="279"/>
    </location>
</feature>
<feature type="strand" evidence="27">
    <location>
        <begin position="294"/>
        <end position="296"/>
    </location>
</feature>
<feature type="strand" evidence="27">
    <location>
        <begin position="302"/>
        <end position="305"/>
    </location>
</feature>
<feature type="strand" evidence="28">
    <location>
        <begin position="309"/>
        <end position="313"/>
    </location>
</feature>
<feature type="helix" evidence="27">
    <location>
        <begin position="322"/>
        <end position="324"/>
    </location>
</feature>
<feature type="strand" evidence="27">
    <location>
        <begin position="330"/>
        <end position="334"/>
    </location>
</feature>
<feature type="strand" evidence="27">
    <location>
        <begin position="336"/>
        <end position="346"/>
    </location>
</feature>
<feature type="strand" evidence="27">
    <location>
        <begin position="353"/>
        <end position="356"/>
    </location>
</feature>
<feature type="strand" evidence="27">
    <location>
        <begin position="360"/>
        <end position="363"/>
    </location>
</feature>
<feature type="helix" evidence="27">
    <location>
        <begin position="364"/>
        <end position="371"/>
    </location>
</feature>
<feature type="strand" evidence="27">
    <location>
        <begin position="382"/>
        <end position="385"/>
    </location>
</feature>
<feature type="strand" evidence="27">
    <location>
        <begin position="390"/>
        <end position="392"/>
    </location>
</feature>
<feature type="strand" evidence="27">
    <location>
        <begin position="394"/>
        <end position="397"/>
    </location>
</feature>
<feature type="strand" evidence="27">
    <location>
        <begin position="399"/>
        <end position="402"/>
    </location>
</feature>
<feature type="helix" evidence="27">
    <location>
        <begin position="404"/>
        <end position="407"/>
    </location>
</feature>
<feature type="strand" evidence="27">
    <location>
        <begin position="415"/>
        <end position="423"/>
    </location>
</feature>
<feature type="strand" evidence="27">
    <location>
        <begin position="432"/>
        <end position="439"/>
    </location>
</feature>
<feature type="turn" evidence="28">
    <location>
        <begin position="452"/>
        <end position="454"/>
    </location>
</feature>
<feature type="strand" evidence="27">
    <location>
        <begin position="455"/>
        <end position="458"/>
    </location>
</feature>
<feature type="helix" evidence="29">
    <location>
        <begin position="470"/>
        <end position="472"/>
    </location>
</feature>
<comment type="function">
    <text evidence="7 10 14 15 16 17 18 20 21">Histone methyltransferase which contributes to the establishment of heterochromatin by specifically methylating histone H3 to form H3K9me (PubMed:16024659, PubMed:8138176). Part of the Clr4 methyltransferase complex (ClrC). ClrC preferentially ubiquitylates H3K14 and ClrC-mediated H3 ubiquitination promotes clr4 methyltransferase activity (PubMed:31468675). Clr4 functions as a reader and writer of H3K9 methylation. It sets the H3K9me mark and afterwards this H3K9me mark is recognized by the chromodomains of clr4 and swi6/HP1, which then recruit additional clr4 leading to the methylation of neighboring nucleosomes (PubMed:11242054, PubMed:18345014, PubMed:21224386). H3K9me represents a specific tag for epigenetic transcriptional repression by recruiting swi6/HP1 to methylated histones which leads to transcriptional silencing within centromeric heterochromatin, telomeres, ribosomal DNA repeats, and the silent mating-type region (PubMed:16024659, PubMed:8138176). Clr4 methyltransferase activity promotes the assembly of a tripartite complex composed of ClrC and complexes involved in siRNA generation (PubMed:20705239). Apart from H3K9, also methylates non-histone proteins such as mlo3 (PubMed:21436456, PubMed:28143796). Interacts with mlo3 to promote the processing of centromeric and antisense RNAs (PubMed:21436456).</text>
</comment>
<comment type="catalytic activity">
    <reaction evidence="8">
        <text>L-lysyl(9)-[histone H3] + 3 S-adenosyl-L-methionine = N(6),N(6),N(6)-trimethyl-L-lysyl(9)-[histone H3] + 3 S-adenosyl-L-homocysteine + 3 H(+)</text>
        <dbReference type="Rhea" id="RHEA:60276"/>
        <dbReference type="Rhea" id="RHEA-COMP:15538"/>
        <dbReference type="Rhea" id="RHEA-COMP:15546"/>
        <dbReference type="ChEBI" id="CHEBI:15378"/>
        <dbReference type="ChEBI" id="CHEBI:29969"/>
        <dbReference type="ChEBI" id="CHEBI:57856"/>
        <dbReference type="ChEBI" id="CHEBI:59789"/>
        <dbReference type="ChEBI" id="CHEBI:61961"/>
        <dbReference type="EC" id="2.1.1.355"/>
    </reaction>
</comment>
<comment type="catalytic activity">
    <reaction evidence="8 19">
        <text>N(6)-methyl-L-lysyl(9)-[histone H3] + S-adenosyl-L-methionine = N(6),N(6)-dimethyl-L-lysyl(9)-[histone H3] + S-adenosyl-L-homocysteine + H(+)</text>
        <dbReference type="Rhea" id="RHEA:60284"/>
        <dbReference type="Rhea" id="RHEA-COMP:15541"/>
        <dbReference type="Rhea" id="RHEA-COMP:15542"/>
        <dbReference type="ChEBI" id="CHEBI:15378"/>
        <dbReference type="ChEBI" id="CHEBI:57856"/>
        <dbReference type="ChEBI" id="CHEBI:59789"/>
        <dbReference type="ChEBI" id="CHEBI:61929"/>
        <dbReference type="ChEBI" id="CHEBI:61976"/>
    </reaction>
</comment>
<comment type="catalytic activity">
    <reaction evidence="19">
        <text>N(6),N(6)-dimethyl-L-lysyl(9)-[histone H3] + S-adenosyl-L-methionine = N(6),N(6),N(6)-trimethyl-L-lysyl(9)-[histone H3] + S-adenosyl-L-homocysteine + H(+)</text>
        <dbReference type="Rhea" id="RHEA:60288"/>
        <dbReference type="Rhea" id="RHEA-COMP:15538"/>
        <dbReference type="Rhea" id="RHEA-COMP:15541"/>
        <dbReference type="ChEBI" id="CHEBI:15378"/>
        <dbReference type="ChEBI" id="CHEBI:57856"/>
        <dbReference type="ChEBI" id="CHEBI:59789"/>
        <dbReference type="ChEBI" id="CHEBI:61961"/>
        <dbReference type="ChEBI" id="CHEBI:61976"/>
        <dbReference type="EC" id="2.1.1.366"/>
    </reaction>
</comment>
<comment type="catalytic activity">
    <reaction evidence="18">
        <text>L-lysyl-[protein] + S-adenosyl-L-methionine = N(6)-methyl-L-lysyl-[protein] + S-adenosyl-L-homocysteine + H(+)</text>
        <dbReference type="Rhea" id="RHEA:51736"/>
        <dbReference type="Rhea" id="RHEA-COMP:9752"/>
        <dbReference type="Rhea" id="RHEA-COMP:13053"/>
        <dbReference type="ChEBI" id="CHEBI:15378"/>
        <dbReference type="ChEBI" id="CHEBI:29969"/>
        <dbReference type="ChEBI" id="CHEBI:57856"/>
        <dbReference type="ChEBI" id="CHEBI:59789"/>
        <dbReference type="ChEBI" id="CHEBI:61929"/>
    </reaction>
</comment>
<comment type="catalytic activity">
    <reaction evidence="18">
        <text>N(6)-methyl-L-lysyl-[protein] + S-adenosyl-L-methionine = N(6),N(6)-dimethyl-L-lysyl-[protein] + S-adenosyl-L-homocysteine + H(+)</text>
        <dbReference type="Rhea" id="RHEA:54196"/>
        <dbReference type="Rhea" id="RHEA-COMP:13053"/>
        <dbReference type="Rhea" id="RHEA-COMP:13827"/>
        <dbReference type="ChEBI" id="CHEBI:15378"/>
        <dbReference type="ChEBI" id="CHEBI:57856"/>
        <dbReference type="ChEBI" id="CHEBI:59789"/>
        <dbReference type="ChEBI" id="CHEBI:61929"/>
        <dbReference type="ChEBI" id="CHEBI:61976"/>
    </reaction>
</comment>
<comment type="catalytic activity">
    <reaction evidence="18">
        <text>N(6),N(6)-dimethyl-L-lysyl-[protein] + S-adenosyl-L-methionine = N(6),N(6),N(6)-trimethyl-L-lysyl-[protein] + S-adenosyl-L-homocysteine + H(+)</text>
        <dbReference type="Rhea" id="RHEA:54200"/>
        <dbReference type="Rhea" id="RHEA-COMP:13826"/>
        <dbReference type="Rhea" id="RHEA-COMP:13827"/>
        <dbReference type="ChEBI" id="CHEBI:15378"/>
        <dbReference type="ChEBI" id="CHEBI:57856"/>
        <dbReference type="ChEBI" id="CHEBI:59789"/>
        <dbReference type="ChEBI" id="CHEBI:61961"/>
        <dbReference type="ChEBI" id="CHEBI:61976"/>
    </reaction>
</comment>
<comment type="catalytic activity">
    <reaction evidence="6 8">
        <text>L-lysyl(9)-[histone H3] + S-adenosyl-L-methionine = N(6)-methyl-L-lysyl(9)-[histone H3] + S-adenosyl-L-homocysteine + H(+)</text>
        <dbReference type="Rhea" id="RHEA:60280"/>
        <dbReference type="Rhea" id="RHEA-COMP:15542"/>
        <dbReference type="Rhea" id="RHEA-COMP:15546"/>
        <dbReference type="ChEBI" id="CHEBI:15378"/>
        <dbReference type="ChEBI" id="CHEBI:29969"/>
        <dbReference type="ChEBI" id="CHEBI:57856"/>
        <dbReference type="ChEBI" id="CHEBI:59789"/>
        <dbReference type="ChEBI" id="CHEBI:61929"/>
        <dbReference type="EC" id="2.1.1.367"/>
    </reaction>
</comment>
<comment type="activity regulation">
    <text evidence="19">An internal loop (autoregulatory loop) inhibits the catalytic activity of the enzyme by blocking the histone H3K9 substrate-binding pocket. Autocatalytic methylation of specific lysine residues in this loop promote a conformational switch that enhances the H3K9me activity of clr4.</text>
</comment>
<comment type="subunit">
    <text evidence="9 10 11 13 17">Component of the Clr4 methyltransferase complex (ClrC) composed of at least clr4, rik1, pcu4, rbx1, raf1 and raf2. The cullin pcu4, rik1, raf1, raf2 and the ring-box protein rbx1 are components of an E3 ubiquitin ligase, whose activity is essential for heterochromatin assembly (PubMed:12389037, PubMed:16024659, PubMed:16127433, PubMed:17114925). Interacts directly with pcu4 (PubMed:16127433). Interacts with mlo3 (PubMed:21436456).</text>
</comment>
<comment type="interaction">
    <interactant intactId="EBI-354657">
        <id>O60016</id>
    </interactant>
    <interactant intactId="EBI-904890">
        <id>O14122</id>
        <label>pcu4</label>
    </interactant>
    <organismsDiffer>false</organismsDiffer>
    <experiments>3</experiments>
</comment>
<comment type="interaction">
    <interactant intactId="EBI-354657">
        <id>O60016</id>
    </interactant>
    <interactant intactId="EBI-1111936">
        <id>Q10426</id>
        <label>rik1</label>
    </interactant>
    <organismsDiffer>false</organismsDiffer>
    <experiments>3</experiments>
</comment>
<comment type="interaction">
    <interactant intactId="EBI-354657">
        <id>O60016</id>
    </interactant>
    <interactant intactId="EBI-2651917">
        <id>O94276</id>
        <label>SPBP8B7.28c</label>
    </interactant>
    <organismsDiffer>false</organismsDiffer>
    <experiments>2</experiments>
</comment>
<comment type="subcellular location">
    <subcellularLocation>
        <location evidence="12 14">Nucleus</location>
    </subcellularLocation>
    <subcellularLocation>
        <location evidence="12">Cytoplasm</location>
        <location evidence="12">Cytoskeleton</location>
        <location evidence="12">Microtubule organizing center</location>
        <location evidence="12">Spindle pole body</location>
    </subcellularLocation>
    <subcellularLocation>
        <location evidence="14 24">Chromosome</location>
    </subcellularLocation>
</comment>
<comment type="domain">
    <text evidence="14">The chromodomain serves to recognize and bind to H3K9me.</text>
</comment>
<comment type="domain">
    <text>In the pre-SET domain, Cys residues bind 3 zinc ions that are arranged in a triangular cluster; some of these Cys residues contribute to the binding of two zinc ions within the cluster.</text>
</comment>
<comment type="PTM">
    <text evidence="19">Autocatalytic methylation of specific lysine residues in an internal loop (autoregulatory loop) promote a conformational switch that enhances the H3K9me activity of clr4.</text>
</comment>
<comment type="similarity">
    <text evidence="4">Belongs to the class V-like SAM-binding methyltransferase superfamily. Histone-lysine methyltransferase family. Suvar3-9 subfamily.</text>
</comment>
<keyword id="KW-0002">3D-structure</keyword>
<keyword id="KW-0156">Chromatin regulator</keyword>
<keyword id="KW-0158">Chromosome</keyword>
<keyword id="KW-0963">Cytoplasm</keyword>
<keyword id="KW-0206">Cytoskeleton</keyword>
<keyword id="KW-0903">Direct protein sequencing</keyword>
<keyword id="KW-0479">Metal-binding</keyword>
<keyword id="KW-0488">Methylation</keyword>
<keyword id="KW-0489">Methyltransferase</keyword>
<keyword id="KW-0539">Nucleus</keyword>
<keyword id="KW-1185">Reference proteome</keyword>
<keyword id="KW-0949">S-adenosyl-L-methionine</keyword>
<keyword id="KW-0808">Transferase</keyword>
<keyword id="KW-0862">Zinc</keyword>
<name>CLR4_SCHPO</name>
<proteinExistence type="evidence at protein level"/>
<dbReference type="EC" id="2.1.1.355" evidence="8"/>
<dbReference type="EC" id="2.1.1.366" evidence="19"/>
<dbReference type="EC" id="2.1.1.367" evidence="6 8"/>
<dbReference type="EMBL" id="AF061854">
    <property type="protein sequence ID" value="AAC18302.1"/>
    <property type="molecule type" value="Genomic_DNA"/>
</dbReference>
<dbReference type="EMBL" id="AJ007840">
    <property type="protein sequence ID" value="CAA07709.1"/>
    <property type="molecule type" value="Genomic_DNA"/>
</dbReference>
<dbReference type="EMBL" id="CU329671">
    <property type="protein sequence ID" value="CAA22283.1"/>
    <property type="molecule type" value="Genomic_DNA"/>
</dbReference>
<dbReference type="PIR" id="T43700">
    <property type="entry name" value="T43700"/>
</dbReference>
<dbReference type="PIR" id="T43745">
    <property type="entry name" value="T43745"/>
</dbReference>
<dbReference type="RefSeq" id="NP_595186.1">
    <property type="nucleotide sequence ID" value="NM_001021094.2"/>
</dbReference>
<dbReference type="PDB" id="1G6Z">
    <property type="method" value="NMR"/>
    <property type="chains" value="A=2-69"/>
</dbReference>
<dbReference type="PDB" id="1MVH">
    <property type="method" value="X-ray"/>
    <property type="resolution" value="2.30 A"/>
    <property type="chains" value="A=192-490"/>
</dbReference>
<dbReference type="PDB" id="1MVX">
    <property type="method" value="X-ray"/>
    <property type="resolution" value="3.00 A"/>
    <property type="chains" value="A=192-490"/>
</dbReference>
<dbReference type="PDB" id="6BOX">
    <property type="method" value="X-ray"/>
    <property type="resolution" value="2.41 A"/>
    <property type="chains" value="A/B=192-490"/>
</dbReference>
<dbReference type="PDB" id="6BP4">
    <property type="method" value="X-ray"/>
    <property type="resolution" value="2.77 A"/>
    <property type="chains" value="A/B=192-490"/>
</dbReference>
<dbReference type="PDBsum" id="1G6Z"/>
<dbReference type="PDBsum" id="1MVH"/>
<dbReference type="PDBsum" id="1MVX"/>
<dbReference type="PDBsum" id="6BOX"/>
<dbReference type="PDBsum" id="6BP4"/>
<dbReference type="SMR" id="O60016"/>
<dbReference type="BioGRID" id="277343">
    <property type="interactions" value="311"/>
</dbReference>
<dbReference type="ComplexPortal" id="CPX-9241">
    <property type="entry name" value="CLR4 E3 ubiquitin ligase/methyltransferase complex"/>
</dbReference>
<dbReference type="DIP" id="DIP-32588N"/>
<dbReference type="FunCoup" id="O60016">
    <property type="interactions" value="288"/>
</dbReference>
<dbReference type="IntAct" id="O60016">
    <property type="interactions" value="8"/>
</dbReference>
<dbReference type="MINT" id="O60016"/>
<dbReference type="STRING" id="284812.O60016"/>
<dbReference type="iPTMnet" id="O60016"/>
<dbReference type="PaxDb" id="4896-SPBC428.08c.1"/>
<dbReference type="EnsemblFungi" id="SPBC428.08c.1">
    <property type="protein sequence ID" value="SPBC428.08c.1:pep"/>
    <property type="gene ID" value="SPBC428.08c"/>
</dbReference>
<dbReference type="GeneID" id="2540825"/>
<dbReference type="KEGG" id="spo:2540825"/>
<dbReference type="PomBase" id="SPBC428.08c">
    <property type="gene designation" value="clr4"/>
</dbReference>
<dbReference type="VEuPathDB" id="FungiDB:SPBC428.08c"/>
<dbReference type="eggNOG" id="KOG1082">
    <property type="taxonomic scope" value="Eukaryota"/>
</dbReference>
<dbReference type="HOGENOM" id="CLU_020840_8_2_1"/>
<dbReference type="InParanoid" id="O60016"/>
<dbReference type="OMA" id="EVDDEPC"/>
<dbReference type="PhylomeDB" id="O60016"/>
<dbReference type="EvolutionaryTrace" id="O60016"/>
<dbReference type="PRO" id="PR:O60016"/>
<dbReference type="Proteomes" id="UP000002485">
    <property type="component" value="Chromosome II"/>
</dbReference>
<dbReference type="GO" id="GO:0043494">
    <property type="term" value="C:CLRC complex"/>
    <property type="evidence" value="ECO:0000314"/>
    <property type="project" value="PomBase"/>
</dbReference>
<dbReference type="GO" id="GO:0005737">
    <property type="term" value="C:cytoplasm"/>
    <property type="evidence" value="ECO:0007669"/>
    <property type="project" value="UniProtKB-KW"/>
</dbReference>
<dbReference type="GO" id="GO:0031934">
    <property type="term" value="C:mating-type region heterochromatin"/>
    <property type="evidence" value="ECO:0000314"/>
    <property type="project" value="PomBase"/>
</dbReference>
<dbReference type="GO" id="GO:0005634">
    <property type="term" value="C:nucleus"/>
    <property type="evidence" value="ECO:0007005"/>
    <property type="project" value="PomBase"/>
</dbReference>
<dbReference type="GO" id="GO:0005721">
    <property type="term" value="C:pericentric heterochromatin"/>
    <property type="evidence" value="ECO:0000314"/>
    <property type="project" value="PomBase"/>
</dbReference>
<dbReference type="GO" id="GO:0005816">
    <property type="term" value="C:spindle pole body"/>
    <property type="evidence" value="ECO:0007669"/>
    <property type="project" value="UniProtKB-SubCell"/>
</dbReference>
<dbReference type="GO" id="GO:0140720">
    <property type="term" value="C:subtelomeric heterochromatin"/>
    <property type="evidence" value="ECO:0000314"/>
    <property type="project" value="PomBase"/>
</dbReference>
<dbReference type="GO" id="GO:0003690">
    <property type="term" value="F:double-stranded DNA binding"/>
    <property type="evidence" value="ECO:0000314"/>
    <property type="project" value="PomBase"/>
</dbReference>
<dbReference type="GO" id="GO:0046974">
    <property type="term" value="F:histone H3K9 methyltransferase activity"/>
    <property type="evidence" value="ECO:0000314"/>
    <property type="project" value="UniProtKB"/>
</dbReference>
<dbReference type="GO" id="GO:0140948">
    <property type="term" value="F:histone H3K9 monomethyltransferase activity"/>
    <property type="evidence" value="ECO:0007669"/>
    <property type="project" value="RHEA"/>
</dbReference>
<dbReference type="GO" id="GO:0140949">
    <property type="term" value="F:histone H3K9 trimethyltransferase activity"/>
    <property type="evidence" value="ECO:0007669"/>
    <property type="project" value="UniProtKB-EC"/>
</dbReference>
<dbReference type="GO" id="GO:0140947">
    <property type="term" value="F:histone H3K9me2 methyltransferase activity"/>
    <property type="evidence" value="ECO:0007669"/>
    <property type="project" value="RHEA"/>
</dbReference>
<dbReference type="GO" id="GO:0042054">
    <property type="term" value="F:histone methyltransferase activity"/>
    <property type="evidence" value="ECO:0000318"/>
    <property type="project" value="GO_Central"/>
</dbReference>
<dbReference type="GO" id="GO:0140566">
    <property type="term" value="F:histone reader activity"/>
    <property type="evidence" value="ECO:0000269"/>
    <property type="project" value="PomBase"/>
</dbReference>
<dbReference type="GO" id="GO:0008168">
    <property type="term" value="F:methyltransferase activity"/>
    <property type="evidence" value="ECO:0000314"/>
    <property type="project" value="UniProtKB"/>
</dbReference>
<dbReference type="GO" id="GO:0016279">
    <property type="term" value="F:protein-lysine N-methyltransferase activity"/>
    <property type="evidence" value="ECO:0000314"/>
    <property type="project" value="PomBase"/>
</dbReference>
<dbReference type="GO" id="GO:0003697">
    <property type="term" value="F:single-stranded DNA binding"/>
    <property type="evidence" value="ECO:0000314"/>
    <property type="project" value="PomBase"/>
</dbReference>
<dbReference type="GO" id="GO:0003727">
    <property type="term" value="F:single-stranded RNA binding"/>
    <property type="evidence" value="ECO:0000314"/>
    <property type="project" value="PomBase"/>
</dbReference>
<dbReference type="GO" id="GO:0043130">
    <property type="term" value="F:ubiquitin binding"/>
    <property type="evidence" value="ECO:0000269"/>
    <property type="project" value="PomBase"/>
</dbReference>
<dbReference type="GO" id="GO:0061649">
    <property type="term" value="F:ubiquitin-modified histone reader activity"/>
    <property type="evidence" value="ECO:0000353"/>
    <property type="project" value="PomBase"/>
</dbReference>
<dbReference type="GO" id="GO:0008270">
    <property type="term" value="F:zinc ion binding"/>
    <property type="evidence" value="ECO:0007669"/>
    <property type="project" value="InterPro"/>
</dbReference>
<dbReference type="GO" id="GO:0033562">
    <property type="term" value="P:co-transcriptional gene silencing by RNA interference machinery"/>
    <property type="evidence" value="ECO:0000315"/>
    <property type="project" value="PomBase"/>
</dbReference>
<dbReference type="GO" id="GO:0032259">
    <property type="term" value="P:methylation"/>
    <property type="evidence" value="ECO:0007669"/>
    <property type="project" value="UniProtKB-KW"/>
</dbReference>
<dbReference type="GO" id="GO:0031508">
    <property type="term" value="P:pericentric heterochromatin formation"/>
    <property type="evidence" value="ECO:0000315"/>
    <property type="project" value="PomBase"/>
</dbReference>
<dbReference type="GO" id="GO:0030466">
    <property type="term" value="P:silent mating-type cassette heterochromatin formation"/>
    <property type="evidence" value="ECO:0000315"/>
    <property type="project" value="PomBase"/>
</dbReference>
<dbReference type="GO" id="GO:1902794">
    <property type="term" value="P:siRNA-independent facultative heterochromatin formation"/>
    <property type="evidence" value="ECO:0000315"/>
    <property type="project" value="PomBase"/>
</dbReference>
<dbReference type="GO" id="GO:0140727">
    <property type="term" value="P:siRNA-mediated pericentric heterochromatin formation"/>
    <property type="evidence" value="ECO:0000269"/>
    <property type="project" value="PomBase"/>
</dbReference>
<dbReference type="GO" id="GO:0031509">
    <property type="term" value="P:subtelomeric heterochromatin formation"/>
    <property type="evidence" value="ECO:0000315"/>
    <property type="project" value="PomBase"/>
</dbReference>
<dbReference type="CDD" id="cd18632">
    <property type="entry name" value="CD_Clr4_like"/>
    <property type="match status" value="1"/>
</dbReference>
<dbReference type="CDD" id="cd20073">
    <property type="entry name" value="SET_SUV39H_Clr4-like"/>
    <property type="match status" value="1"/>
</dbReference>
<dbReference type="FunFam" id="2.40.50.40:FF:000085">
    <property type="entry name" value="Chromo domain-containing protein 1"/>
    <property type="match status" value="1"/>
</dbReference>
<dbReference type="Gene3D" id="2.40.50.40">
    <property type="match status" value="1"/>
</dbReference>
<dbReference type="Gene3D" id="2.170.270.10">
    <property type="entry name" value="SET domain"/>
    <property type="match status" value="1"/>
</dbReference>
<dbReference type="InterPro" id="IPR016197">
    <property type="entry name" value="Chromo-like_dom_sf"/>
</dbReference>
<dbReference type="InterPro" id="IPR000953">
    <property type="entry name" value="Chromo/chromo_shadow_dom"/>
</dbReference>
<dbReference type="InterPro" id="IPR023780">
    <property type="entry name" value="Chromo_domain"/>
</dbReference>
<dbReference type="InterPro" id="IPR023779">
    <property type="entry name" value="Chromodomain_CS"/>
</dbReference>
<dbReference type="InterPro" id="IPR011381">
    <property type="entry name" value="H3-K9_MeTrfase_SUV39H1/2-like"/>
</dbReference>
<dbReference type="InterPro" id="IPR050973">
    <property type="entry name" value="H3K9_Histone-Lys_N-MTase"/>
</dbReference>
<dbReference type="InterPro" id="IPR003616">
    <property type="entry name" value="Post-SET_dom"/>
</dbReference>
<dbReference type="InterPro" id="IPR007728">
    <property type="entry name" value="Pre-SET_dom"/>
</dbReference>
<dbReference type="InterPro" id="IPR001214">
    <property type="entry name" value="SET_dom"/>
</dbReference>
<dbReference type="InterPro" id="IPR046341">
    <property type="entry name" value="SET_dom_sf"/>
</dbReference>
<dbReference type="PANTHER" id="PTHR46223:SF3">
    <property type="entry name" value="HISTONE-LYSINE N-METHYLTRANSFERASE SET-23"/>
    <property type="match status" value="1"/>
</dbReference>
<dbReference type="PANTHER" id="PTHR46223">
    <property type="entry name" value="HISTONE-LYSINE N-METHYLTRANSFERASE SUV39H"/>
    <property type="match status" value="1"/>
</dbReference>
<dbReference type="Pfam" id="PF00385">
    <property type="entry name" value="Chromo"/>
    <property type="match status" value="1"/>
</dbReference>
<dbReference type="Pfam" id="PF05033">
    <property type="entry name" value="Pre-SET"/>
    <property type="match status" value="1"/>
</dbReference>
<dbReference type="Pfam" id="PF00856">
    <property type="entry name" value="SET"/>
    <property type="match status" value="1"/>
</dbReference>
<dbReference type="PIRSF" id="PIRSF009343">
    <property type="entry name" value="SUV39_SET"/>
    <property type="match status" value="1"/>
</dbReference>
<dbReference type="SMART" id="SM00298">
    <property type="entry name" value="CHROMO"/>
    <property type="match status" value="1"/>
</dbReference>
<dbReference type="SMART" id="SM00508">
    <property type="entry name" value="PostSET"/>
    <property type="match status" value="1"/>
</dbReference>
<dbReference type="SMART" id="SM00468">
    <property type="entry name" value="PreSET"/>
    <property type="match status" value="1"/>
</dbReference>
<dbReference type="SMART" id="SM00317">
    <property type="entry name" value="SET"/>
    <property type="match status" value="1"/>
</dbReference>
<dbReference type="SUPFAM" id="SSF54160">
    <property type="entry name" value="Chromo domain-like"/>
    <property type="match status" value="1"/>
</dbReference>
<dbReference type="SUPFAM" id="SSF82199">
    <property type="entry name" value="SET domain"/>
    <property type="match status" value="1"/>
</dbReference>
<dbReference type="PROSITE" id="PS00598">
    <property type="entry name" value="CHROMO_1"/>
    <property type="match status" value="1"/>
</dbReference>
<dbReference type="PROSITE" id="PS50013">
    <property type="entry name" value="CHROMO_2"/>
    <property type="match status" value="1"/>
</dbReference>
<dbReference type="PROSITE" id="PS50868">
    <property type="entry name" value="POST_SET"/>
    <property type="match status" value="1"/>
</dbReference>
<dbReference type="PROSITE" id="PS50867">
    <property type="entry name" value="PRE_SET"/>
    <property type="match status" value="1"/>
</dbReference>
<dbReference type="PROSITE" id="PS50280">
    <property type="entry name" value="SET"/>
    <property type="match status" value="1"/>
</dbReference>
<accession>O60016</accession>
<accession>O74565</accession>